<protein>
    <recommendedName>
        <fullName evidence="3">Transcription factor fscB</fullName>
    </recommendedName>
    <alternativeName>
        <fullName evidence="3">Fusarochromene biosynthesis cluster protein B</fullName>
    </alternativeName>
</protein>
<comment type="function">
    <text evidence="2">Transcription factor; part of the fragmented gene cluster that mediates the biosynthesis of fusarochromene, a tryptophan-derived metabolite closely related to a group of mycotoxins including fusarochromanone.</text>
</comment>
<comment type="subcellular location">
    <subcellularLocation>
        <location evidence="4">Nucleus</location>
    </subcellularLocation>
</comment>
<comment type="similarity">
    <text evidence="4">Belongs to the POU transcription factor family. Class-3 subfamily.</text>
</comment>
<evidence type="ECO:0000256" key="1">
    <source>
        <dbReference type="SAM" id="MobiDB-lite"/>
    </source>
</evidence>
<evidence type="ECO:0000269" key="2">
    <source>
    </source>
</evidence>
<evidence type="ECO:0000303" key="3">
    <source>
    </source>
</evidence>
<evidence type="ECO:0000305" key="4"/>
<gene>
    <name evidence="3" type="primary">fscB</name>
</gene>
<feature type="chain" id="PRO_0000461411" description="Transcription factor fscB">
    <location>
        <begin position="1"/>
        <end position="474"/>
    </location>
</feature>
<feature type="region of interest" description="Disordered" evidence="1">
    <location>
        <begin position="114"/>
        <end position="153"/>
    </location>
</feature>
<feature type="region of interest" description="Disordered" evidence="1">
    <location>
        <begin position="207"/>
        <end position="242"/>
    </location>
</feature>
<feature type="compositionally biased region" description="Low complexity" evidence="1">
    <location>
        <begin position="120"/>
        <end position="131"/>
    </location>
</feature>
<feature type="compositionally biased region" description="Polar residues" evidence="1">
    <location>
        <begin position="132"/>
        <end position="153"/>
    </location>
</feature>
<feature type="compositionally biased region" description="Basic and acidic residues" evidence="1">
    <location>
        <begin position="207"/>
        <end position="221"/>
    </location>
</feature>
<feature type="compositionally biased region" description="Polar residues" evidence="1">
    <location>
        <begin position="222"/>
        <end position="240"/>
    </location>
</feature>
<dbReference type="EMBL" id="BK013344">
    <property type="protein sequence ID" value="DAD54575.1"/>
    <property type="molecule type" value="Genomic_DNA"/>
</dbReference>
<dbReference type="GO" id="GO:0005634">
    <property type="term" value="C:nucleus"/>
    <property type="evidence" value="ECO:0007669"/>
    <property type="project" value="UniProtKB-SubCell"/>
</dbReference>
<proteinExistence type="inferred from homology"/>
<organism>
    <name type="scientific">Fusarium equiseti</name>
    <name type="common">Fusarium scirpi</name>
    <dbReference type="NCBI Taxonomy" id="61235"/>
    <lineage>
        <taxon>Eukaryota</taxon>
        <taxon>Fungi</taxon>
        <taxon>Dikarya</taxon>
        <taxon>Ascomycota</taxon>
        <taxon>Pezizomycotina</taxon>
        <taxon>Sordariomycetes</taxon>
        <taxon>Hypocreomycetidae</taxon>
        <taxon>Hypocreales</taxon>
        <taxon>Nectriaceae</taxon>
        <taxon>Fusarium</taxon>
        <taxon>Fusarium incarnatum-equiseti species complex</taxon>
    </lineage>
</organism>
<accession>A0A822ZYY0</accession>
<reference key="1">
    <citation type="journal article" date="2021" name="Org. Biomol. Chem.">
        <title>Fusarochromene, a novel tryptophan-derived metabolite from Fusarium sacchari.</title>
        <authorList>
            <person name="Marshall J.W."/>
            <person name="de Mattos-Shipley K.M.J."/>
            <person name="Ghannam I.A.Y."/>
            <person name="Munawar A."/>
            <person name="Killen J.C."/>
            <person name="Lazarus C.M."/>
            <person name="Cox R.J."/>
            <person name="Willis C.L."/>
            <person name="Simpson T.J."/>
        </authorList>
    </citation>
    <scope>NUCLEOTIDE SEQUENCE [GENOMIC DNA]</scope>
    <scope>FUNCTION</scope>
</reference>
<keyword id="KW-0539">Nucleus</keyword>
<keyword id="KW-0804">Transcription</keyword>
<keyword id="KW-0805">Transcription regulation</keyword>
<sequence length="474" mass="53252">MECHYSEAQLASLLLPYLERFDENAINGLASELKSHGISVYAAAGFDPNVGSSLTFKKEVPPSDTSILEDVDHVNLYSEQDNFHLSMLDMMDFHTPDIMDIGLFTDVQHEGDPVDELELSSDTRSSLSPSSHNTTTGHETGLSSVTPPQSYWTSDNLVSTRALPTTGDKQLSPQRRTEIADISSLPTCQQISLEPQCHSVMEAPCHGKEVTKRNKRSRTEAQEASNSPCASSTADSQTNPAPLRLRSVFGPGTKYNLSHKSLHEISDISENCIRPDLVEFLEERLTRWKKTGFWHQDQIPEPTASGAGREKLIDAYSCICRLESRMKDDQILNRVAVVMLHTAYEQACQEWRHAGTHQRKGRGRGDATTVIDEILSELHEDWDVGDRKRYHRSRFHDKKRFGKRWLVLIKSLGVGILLCSSQRLASAVYVLPFQITLFILDTNLSESAATRRFLPATCCRRWFAVSNSLRLNSC</sequence>
<name>FSCB_FUSEQ</name>